<proteinExistence type="evidence at protein level"/>
<name>STX3_ENTQU</name>
<organism>
    <name type="scientific">Entacmaea quadricolor</name>
    <name type="common">Bubble-tip anemone</name>
    <name type="synonym">Parasicyonis actinostoloides</name>
    <dbReference type="NCBI Taxonomy" id="6118"/>
    <lineage>
        <taxon>Eukaryota</taxon>
        <taxon>Metazoa</taxon>
        <taxon>Cnidaria</taxon>
        <taxon>Anthozoa</taxon>
        <taxon>Hexacorallia</taxon>
        <taxon>Actiniaria</taxon>
        <taxon>Actiniidae</taxon>
        <taxon>Entacmaea</taxon>
    </lineage>
</organism>
<reference key="1">
    <citation type="journal article" date="2003" name="Toxicon">
        <title>Occurrence of type 3 sodium channel peptide toxins in two species of sea anemones (Dofleinia armata and Entacmaea ramsayi).</title>
        <authorList>
            <person name="Honma T."/>
            <person name="Iso T."/>
            <person name="Ishida M."/>
            <person name="Nagashima Y."/>
            <person name="Shiomi K."/>
        </authorList>
    </citation>
    <scope>PROTEIN SEQUENCE OF 1-31</scope>
</reference>
<reference key="2">
    <citation type="journal article" date="1985" name="Eur. J. Biochem.">
        <title>Amino acid sequence of a sea anemone toxin from Parasicyonis actinostoloides.</title>
        <authorList>
            <person name="Nishida S."/>
            <person name="Fujita S."/>
            <person name="Warashina A."/>
            <person name="Satake M."/>
            <person name="Tamiya N."/>
        </authorList>
    </citation>
    <scope>PROTEIN SEQUENCE</scope>
    <source>
        <tissue>Nematoblast</tissue>
    </source>
</reference>
<reference key="3">
    <citation type="journal article" date="1979" name="J. Neurochem.">
        <title>Purification and effect of the neurotoxin from the sea anemone Parasicyonis actinostoloides.</title>
        <authorList>
            <person name="Ishikawa Y."/>
            <person name="Onodera K."/>
            <person name="Takeuchi A."/>
        </authorList>
    </citation>
    <scope>FUNCTION</scope>
    <scope>TOXIC DOSE</scope>
</reference>
<reference key="4">
    <citation type="journal article" date="1980" name="Comp. Biochem. Physiol.">
        <title>Parasicyonis toxin: effect on crayfish giant axon.</title>
        <authorList>
            <person name="Fujita S."/>
            <person name="Warashina A."/>
        </authorList>
    </citation>
    <scope>FUNCTION</scope>
</reference>
<reference key="5">
    <citation type="journal article" date="2012" name="Toxicon">
        <title>Development of a rational nomenclature for naming peptide and protein toxins from sea anemones.</title>
        <authorList>
            <person name="Oliveira J.S."/>
            <person name="Fuentes-Silva D."/>
            <person name="King G.F."/>
        </authorList>
    </citation>
    <scope>NOMENCLATURE</scope>
</reference>
<accession>P09949</accession>
<evidence type="ECO:0000269" key="1">
    <source>
    </source>
</evidence>
<evidence type="ECO:0000269" key="2">
    <source>
    </source>
</evidence>
<evidence type="ECO:0000269" key="3">
    <source>
    </source>
</evidence>
<evidence type="ECO:0000303" key="4">
    <source>
    </source>
</evidence>
<evidence type="ECO:0000303" key="5">
    <source>
    </source>
</evidence>
<evidence type="ECO:0000303" key="6">
    <source>
    </source>
</evidence>
<evidence type="ECO:0000305" key="7"/>
<evidence type="ECO:0000305" key="8">
    <source>
    </source>
</evidence>
<evidence type="ECO:0000305" key="9">
    <source>
    </source>
</evidence>
<protein>
    <recommendedName>
        <fullName evidence="5">Delta-actitoxin-Eqd1a</fullName>
        <shortName evidence="5">Delta-AITX-Eqd1a</shortName>
    </recommendedName>
    <alternativeName>
        <fullName evidence="5">Delta-actitoxin-Ers1a</fullName>
        <shortName evidence="5">Delta-AITX-Ers1a</shortName>
    </alternativeName>
    <alternativeName>
        <fullName evidence="5">Er-I</fullName>
        <shortName evidence="4">Er I</shortName>
    </alternativeName>
    <alternativeName>
        <fullName evidence="9">Neurotoxin 3 homolog</fullName>
    </alternativeName>
    <alternativeName>
        <fullName evidence="9">Neurotoxin III homolog</fullName>
    </alternativeName>
    <alternativeName>
        <fullName evidence="6">Parasicyonis toxin</fullName>
        <shortName evidence="6">PATX</shortName>
    </alternativeName>
</protein>
<keyword id="KW-0903">Direct protein sequencing</keyword>
<keyword id="KW-1015">Disulfide bond</keyword>
<keyword id="KW-0872">Ion channel impairing toxin</keyword>
<keyword id="KW-0166">Nematocyst</keyword>
<keyword id="KW-0528">Neurotoxin</keyword>
<keyword id="KW-0964">Secreted</keyword>
<keyword id="KW-0800">Toxin</keyword>
<keyword id="KW-0738">Voltage-gated sodium channel impairing toxin</keyword>
<sequence>AGGKSTCCPCAMCKYTAGCPWGQCAHHCGCSE</sequence>
<dbReference type="PIR" id="A25210">
    <property type="entry name" value="A25210"/>
</dbReference>
<dbReference type="GO" id="GO:0005576">
    <property type="term" value="C:extracellular region"/>
    <property type="evidence" value="ECO:0007669"/>
    <property type="project" value="UniProtKB-SubCell"/>
</dbReference>
<dbReference type="GO" id="GO:0042151">
    <property type="term" value="C:nematocyst"/>
    <property type="evidence" value="ECO:0007669"/>
    <property type="project" value="UniProtKB-SubCell"/>
</dbReference>
<dbReference type="GO" id="GO:0019871">
    <property type="term" value="F:sodium channel inhibitor activity"/>
    <property type="evidence" value="ECO:0007669"/>
    <property type="project" value="InterPro"/>
</dbReference>
<dbReference type="GO" id="GO:0090729">
    <property type="term" value="F:toxin activity"/>
    <property type="evidence" value="ECO:0007669"/>
    <property type="project" value="UniProtKB-KW"/>
</dbReference>
<dbReference type="InterPro" id="IPR016330">
    <property type="entry name" value="Neurotoxin_3_Actiniidae"/>
</dbReference>
<dbReference type="InterPro" id="IPR012509">
    <property type="entry name" value="Neurotoxin_3_Anemonia"/>
</dbReference>
<dbReference type="Pfam" id="PF08098">
    <property type="entry name" value="ATX_III"/>
    <property type="match status" value="1"/>
</dbReference>
<dbReference type="PIRSF" id="PIRSF001906">
    <property type="entry name" value="Neurotoxin_III_Actiniidae"/>
    <property type="match status" value="1"/>
</dbReference>
<feature type="peptide" id="PRO_0000044861" description="Delta-actitoxin-Eqd1a" evidence="1">
    <location>
        <begin position="1"/>
        <end position="32"/>
    </location>
</feature>
<comment type="function">
    <text evidence="2 3">Binds specifically to sodium channels (Nav) of the axonal membrane of crayfish and prolongs the falling phase of the action potential. It also increases the maximum rates of rise of both action potential and resting potential (PubMed:6107210). Is only active on crustaceans.</text>
</comment>
<comment type="subcellular location">
    <subcellularLocation>
        <location evidence="7">Secreted</location>
    </subcellularLocation>
    <subcellularLocation>
        <location evidence="7">Nematocyst</location>
    </subcellularLocation>
</comment>
<comment type="PTM">
    <text>Contains 4 disulfide bonds.</text>
</comment>
<comment type="toxic dose">
    <text evidence="2">LD(50) is 10 pg/kg when injected into crabs.</text>
</comment>
<comment type="similarity">
    <text evidence="7">Belongs to the sea anemone short toxin (type III) family.</text>
</comment>
<comment type="caution">
    <text evidence="8">PubMed:12676443 describes this protein as coming from E.ramsayi, which is considered in this reference as a synonym of E.quadricolor.</text>
</comment>